<accession>Q7N216</accession>
<gene>
    <name evidence="1" type="primary">glyA</name>
    <name type="ordered locus">plu3291</name>
</gene>
<reference key="1">
    <citation type="journal article" date="2003" name="Nat. Biotechnol.">
        <title>The genome sequence of the entomopathogenic bacterium Photorhabdus luminescens.</title>
        <authorList>
            <person name="Duchaud E."/>
            <person name="Rusniok C."/>
            <person name="Frangeul L."/>
            <person name="Buchrieser C."/>
            <person name="Givaudan A."/>
            <person name="Taourit S."/>
            <person name="Bocs S."/>
            <person name="Boursaux-Eude C."/>
            <person name="Chandler M."/>
            <person name="Charles J.-F."/>
            <person name="Dassa E."/>
            <person name="Derose R."/>
            <person name="Derzelle S."/>
            <person name="Freyssinet G."/>
            <person name="Gaudriault S."/>
            <person name="Medigue C."/>
            <person name="Lanois A."/>
            <person name="Powell K."/>
            <person name="Siguier P."/>
            <person name="Vincent R."/>
            <person name="Wingate V."/>
            <person name="Zouine M."/>
            <person name="Glaser P."/>
            <person name="Boemare N."/>
            <person name="Danchin A."/>
            <person name="Kunst F."/>
        </authorList>
    </citation>
    <scope>NUCLEOTIDE SEQUENCE [LARGE SCALE GENOMIC DNA]</scope>
    <source>
        <strain>DSM 15139 / CIP 105565 / TT01</strain>
    </source>
</reference>
<dbReference type="EC" id="2.1.2.1" evidence="1"/>
<dbReference type="EMBL" id="BX571870">
    <property type="protein sequence ID" value="CAE15665.1"/>
    <property type="molecule type" value="Genomic_DNA"/>
</dbReference>
<dbReference type="RefSeq" id="WP_011147486.1">
    <property type="nucleotide sequence ID" value="NC_005126.1"/>
</dbReference>
<dbReference type="SMR" id="Q7N216"/>
<dbReference type="STRING" id="243265.plu3291"/>
<dbReference type="GeneID" id="48849546"/>
<dbReference type="KEGG" id="plu:plu3291"/>
<dbReference type="eggNOG" id="COG0112">
    <property type="taxonomic scope" value="Bacteria"/>
</dbReference>
<dbReference type="HOGENOM" id="CLU_022477_2_1_6"/>
<dbReference type="OrthoDB" id="9803846at2"/>
<dbReference type="UniPathway" id="UPA00193"/>
<dbReference type="UniPathway" id="UPA00288">
    <property type="reaction ID" value="UER01023"/>
</dbReference>
<dbReference type="Proteomes" id="UP000002514">
    <property type="component" value="Chromosome"/>
</dbReference>
<dbReference type="GO" id="GO:0005829">
    <property type="term" value="C:cytosol"/>
    <property type="evidence" value="ECO:0007669"/>
    <property type="project" value="TreeGrafter"/>
</dbReference>
<dbReference type="GO" id="GO:0004372">
    <property type="term" value="F:glycine hydroxymethyltransferase activity"/>
    <property type="evidence" value="ECO:0007669"/>
    <property type="project" value="UniProtKB-UniRule"/>
</dbReference>
<dbReference type="GO" id="GO:0030170">
    <property type="term" value="F:pyridoxal phosphate binding"/>
    <property type="evidence" value="ECO:0007669"/>
    <property type="project" value="UniProtKB-UniRule"/>
</dbReference>
<dbReference type="GO" id="GO:0019264">
    <property type="term" value="P:glycine biosynthetic process from serine"/>
    <property type="evidence" value="ECO:0007669"/>
    <property type="project" value="UniProtKB-UniRule"/>
</dbReference>
<dbReference type="GO" id="GO:0035999">
    <property type="term" value="P:tetrahydrofolate interconversion"/>
    <property type="evidence" value="ECO:0007669"/>
    <property type="project" value="UniProtKB-UniRule"/>
</dbReference>
<dbReference type="CDD" id="cd00378">
    <property type="entry name" value="SHMT"/>
    <property type="match status" value="1"/>
</dbReference>
<dbReference type="FunFam" id="3.40.640.10:FF:000001">
    <property type="entry name" value="Serine hydroxymethyltransferase"/>
    <property type="match status" value="1"/>
</dbReference>
<dbReference type="FunFam" id="3.90.1150.10:FF:000003">
    <property type="entry name" value="Serine hydroxymethyltransferase"/>
    <property type="match status" value="1"/>
</dbReference>
<dbReference type="Gene3D" id="3.90.1150.10">
    <property type="entry name" value="Aspartate Aminotransferase, domain 1"/>
    <property type="match status" value="1"/>
</dbReference>
<dbReference type="Gene3D" id="3.40.640.10">
    <property type="entry name" value="Type I PLP-dependent aspartate aminotransferase-like (Major domain)"/>
    <property type="match status" value="1"/>
</dbReference>
<dbReference type="HAMAP" id="MF_00051">
    <property type="entry name" value="SHMT"/>
    <property type="match status" value="1"/>
</dbReference>
<dbReference type="InterPro" id="IPR015424">
    <property type="entry name" value="PyrdxlP-dep_Trfase"/>
</dbReference>
<dbReference type="InterPro" id="IPR015421">
    <property type="entry name" value="PyrdxlP-dep_Trfase_major"/>
</dbReference>
<dbReference type="InterPro" id="IPR015422">
    <property type="entry name" value="PyrdxlP-dep_Trfase_small"/>
</dbReference>
<dbReference type="InterPro" id="IPR001085">
    <property type="entry name" value="Ser_HO-MeTrfase"/>
</dbReference>
<dbReference type="InterPro" id="IPR049943">
    <property type="entry name" value="Ser_HO-MeTrfase-like"/>
</dbReference>
<dbReference type="InterPro" id="IPR019798">
    <property type="entry name" value="Ser_HO-MeTrfase_PLP_BS"/>
</dbReference>
<dbReference type="InterPro" id="IPR039429">
    <property type="entry name" value="SHMT-like_dom"/>
</dbReference>
<dbReference type="NCBIfam" id="NF000586">
    <property type="entry name" value="PRK00011.1"/>
    <property type="match status" value="1"/>
</dbReference>
<dbReference type="PANTHER" id="PTHR11680">
    <property type="entry name" value="SERINE HYDROXYMETHYLTRANSFERASE"/>
    <property type="match status" value="1"/>
</dbReference>
<dbReference type="PANTHER" id="PTHR11680:SF50">
    <property type="entry name" value="SERINE HYDROXYMETHYLTRANSFERASE"/>
    <property type="match status" value="1"/>
</dbReference>
<dbReference type="Pfam" id="PF00464">
    <property type="entry name" value="SHMT"/>
    <property type="match status" value="1"/>
</dbReference>
<dbReference type="PIRSF" id="PIRSF000412">
    <property type="entry name" value="SHMT"/>
    <property type="match status" value="1"/>
</dbReference>
<dbReference type="SUPFAM" id="SSF53383">
    <property type="entry name" value="PLP-dependent transferases"/>
    <property type="match status" value="1"/>
</dbReference>
<dbReference type="PROSITE" id="PS00096">
    <property type="entry name" value="SHMT"/>
    <property type="match status" value="1"/>
</dbReference>
<keyword id="KW-0028">Amino-acid biosynthesis</keyword>
<keyword id="KW-0963">Cytoplasm</keyword>
<keyword id="KW-0554">One-carbon metabolism</keyword>
<keyword id="KW-0663">Pyridoxal phosphate</keyword>
<keyword id="KW-1185">Reference proteome</keyword>
<keyword id="KW-0808">Transferase</keyword>
<sequence>MLKREMNIASYDPELWQAMEQEVVRQEEHIELIASENYTSPRVMQAQGSQLTNKYAEGYPGKRYYGGCEYVDVVEQLAIDRAKALFGADYANVQPHSGSQANAAVYMALLQPGDTILGMNLAHGGHLTHGSPVNFSGKLYNVVPYGIDESGKIDYDDIAAQAEKHQPKMIIGGFSAYSGVVDWAKMREIADSIGAYLFVDMAHVAGLIAAGVYPNPVPHAHIVTTTTHKTLAGPRGGLILAKGGDEELYKKLNSSVFPGCQGGPLMHVIAGKAVALKEAMEPEFKAYQHQVADNAKAMVEVFLARGYKVVSGSTENHLFLLDLVDKNITGKDADAALGRANITVNKNSVPNDPKSPFVTSGVRIGTPAITRRGFKQAEARELAGWMCDVLDNINDEVTIEMIKQKVLAICAKYPVYA</sequence>
<proteinExistence type="inferred from homology"/>
<comment type="function">
    <text evidence="1">Catalyzes the reversible interconversion of serine and glycine with tetrahydrofolate (THF) serving as the one-carbon carrier. This reaction serves as the major source of one-carbon groups required for the biosynthesis of purines, thymidylate, methionine, and other important biomolecules. Also exhibits THF-independent aldolase activity toward beta-hydroxyamino acids, producing glycine and aldehydes, via a retro-aldol mechanism.</text>
</comment>
<comment type="catalytic activity">
    <reaction evidence="1">
        <text>(6R)-5,10-methylene-5,6,7,8-tetrahydrofolate + glycine + H2O = (6S)-5,6,7,8-tetrahydrofolate + L-serine</text>
        <dbReference type="Rhea" id="RHEA:15481"/>
        <dbReference type="ChEBI" id="CHEBI:15377"/>
        <dbReference type="ChEBI" id="CHEBI:15636"/>
        <dbReference type="ChEBI" id="CHEBI:33384"/>
        <dbReference type="ChEBI" id="CHEBI:57305"/>
        <dbReference type="ChEBI" id="CHEBI:57453"/>
        <dbReference type="EC" id="2.1.2.1"/>
    </reaction>
</comment>
<comment type="cofactor">
    <cofactor evidence="1">
        <name>pyridoxal 5'-phosphate</name>
        <dbReference type="ChEBI" id="CHEBI:597326"/>
    </cofactor>
</comment>
<comment type="pathway">
    <text evidence="1">One-carbon metabolism; tetrahydrofolate interconversion.</text>
</comment>
<comment type="pathway">
    <text evidence="1">Amino-acid biosynthesis; glycine biosynthesis; glycine from L-serine: step 1/1.</text>
</comment>
<comment type="subunit">
    <text evidence="1">Homodimer.</text>
</comment>
<comment type="subcellular location">
    <subcellularLocation>
        <location evidence="1">Cytoplasm</location>
    </subcellularLocation>
</comment>
<comment type="similarity">
    <text evidence="1">Belongs to the SHMT family.</text>
</comment>
<feature type="chain" id="PRO_0000113630" description="Serine hydroxymethyltransferase">
    <location>
        <begin position="1"/>
        <end position="417"/>
    </location>
</feature>
<feature type="binding site" evidence="1">
    <location>
        <position position="121"/>
    </location>
    <ligand>
        <name>(6S)-5,6,7,8-tetrahydrofolate</name>
        <dbReference type="ChEBI" id="CHEBI:57453"/>
    </ligand>
</feature>
<feature type="binding site" evidence="1">
    <location>
        <begin position="125"/>
        <end position="127"/>
    </location>
    <ligand>
        <name>(6S)-5,6,7,8-tetrahydrofolate</name>
        <dbReference type="ChEBI" id="CHEBI:57453"/>
    </ligand>
</feature>
<feature type="binding site" evidence="1">
    <location>
        <begin position="355"/>
        <end position="357"/>
    </location>
    <ligand>
        <name>(6S)-5,6,7,8-tetrahydrofolate</name>
        <dbReference type="ChEBI" id="CHEBI:57453"/>
    </ligand>
</feature>
<feature type="site" description="Plays an important role in substrate specificity" evidence="1">
    <location>
        <position position="228"/>
    </location>
</feature>
<feature type="modified residue" description="N6-(pyridoxal phosphate)lysine" evidence="1">
    <location>
        <position position="229"/>
    </location>
</feature>
<protein>
    <recommendedName>
        <fullName evidence="1">Serine hydroxymethyltransferase</fullName>
        <shortName evidence="1">SHMT</shortName>
        <shortName evidence="1">Serine methylase</shortName>
        <ecNumber evidence="1">2.1.2.1</ecNumber>
    </recommendedName>
</protein>
<evidence type="ECO:0000255" key="1">
    <source>
        <dbReference type="HAMAP-Rule" id="MF_00051"/>
    </source>
</evidence>
<organism>
    <name type="scientific">Photorhabdus laumondii subsp. laumondii (strain DSM 15139 / CIP 105565 / TT01)</name>
    <name type="common">Photorhabdus luminescens subsp. laumondii</name>
    <dbReference type="NCBI Taxonomy" id="243265"/>
    <lineage>
        <taxon>Bacteria</taxon>
        <taxon>Pseudomonadati</taxon>
        <taxon>Pseudomonadota</taxon>
        <taxon>Gammaproteobacteria</taxon>
        <taxon>Enterobacterales</taxon>
        <taxon>Morganellaceae</taxon>
        <taxon>Photorhabdus</taxon>
    </lineage>
</organism>
<name>GLYA_PHOLL</name>